<reference key="1">
    <citation type="submission" date="2000-05" db="EMBL/GenBank/DDBJ databases">
        <title>Mouse ortholog of human FB1.</title>
        <authorList>
            <person name="Brambillasca F."/>
            <person name="Mosna G."/>
            <person name="Privitera E."/>
        </authorList>
    </citation>
    <scope>NUCLEOTIDE SEQUENCE [MRNA] (ISOFORM 2)</scope>
    <source>
        <strain>C57BL/6 X CBA</strain>
        <tissue>Lung</tissue>
    </source>
</reference>
<reference key="2">
    <citation type="submission" date="2000-11" db="EMBL/GenBank/DDBJ databases">
        <title>Molecular cloning and functional analysis of mouse Amida.</title>
        <authorList>
            <person name="Miki N."/>
            <person name="Miyamoto K."/>
            <person name="Taira E."/>
        </authorList>
    </citation>
    <scope>NUCLEOTIDE SEQUENCE [MRNA] (ISOFORM 2)</scope>
    <source>
        <strain>ddY</strain>
        <tissue>Brain</tissue>
    </source>
</reference>
<reference key="3">
    <citation type="journal article" date="2005" name="Science">
        <title>The transcriptional landscape of the mammalian genome.</title>
        <authorList>
            <person name="Carninci P."/>
            <person name="Kasukawa T."/>
            <person name="Katayama S."/>
            <person name="Gough J."/>
            <person name="Frith M.C."/>
            <person name="Maeda N."/>
            <person name="Oyama R."/>
            <person name="Ravasi T."/>
            <person name="Lenhard B."/>
            <person name="Wells C."/>
            <person name="Kodzius R."/>
            <person name="Shimokawa K."/>
            <person name="Bajic V.B."/>
            <person name="Brenner S.E."/>
            <person name="Batalov S."/>
            <person name="Forrest A.R."/>
            <person name="Zavolan M."/>
            <person name="Davis M.J."/>
            <person name="Wilming L.G."/>
            <person name="Aidinis V."/>
            <person name="Allen J.E."/>
            <person name="Ambesi-Impiombato A."/>
            <person name="Apweiler R."/>
            <person name="Aturaliya R.N."/>
            <person name="Bailey T.L."/>
            <person name="Bansal M."/>
            <person name="Baxter L."/>
            <person name="Beisel K.W."/>
            <person name="Bersano T."/>
            <person name="Bono H."/>
            <person name="Chalk A.M."/>
            <person name="Chiu K.P."/>
            <person name="Choudhary V."/>
            <person name="Christoffels A."/>
            <person name="Clutterbuck D.R."/>
            <person name="Crowe M.L."/>
            <person name="Dalla E."/>
            <person name="Dalrymple B.P."/>
            <person name="de Bono B."/>
            <person name="Della Gatta G."/>
            <person name="di Bernardo D."/>
            <person name="Down T."/>
            <person name="Engstrom P."/>
            <person name="Fagiolini M."/>
            <person name="Faulkner G."/>
            <person name="Fletcher C.F."/>
            <person name="Fukushima T."/>
            <person name="Furuno M."/>
            <person name="Futaki S."/>
            <person name="Gariboldi M."/>
            <person name="Georgii-Hemming P."/>
            <person name="Gingeras T.R."/>
            <person name="Gojobori T."/>
            <person name="Green R.E."/>
            <person name="Gustincich S."/>
            <person name="Harbers M."/>
            <person name="Hayashi Y."/>
            <person name="Hensch T.K."/>
            <person name="Hirokawa N."/>
            <person name="Hill D."/>
            <person name="Huminiecki L."/>
            <person name="Iacono M."/>
            <person name="Ikeo K."/>
            <person name="Iwama A."/>
            <person name="Ishikawa T."/>
            <person name="Jakt M."/>
            <person name="Kanapin A."/>
            <person name="Katoh M."/>
            <person name="Kawasawa Y."/>
            <person name="Kelso J."/>
            <person name="Kitamura H."/>
            <person name="Kitano H."/>
            <person name="Kollias G."/>
            <person name="Krishnan S.P."/>
            <person name="Kruger A."/>
            <person name="Kummerfeld S.K."/>
            <person name="Kurochkin I.V."/>
            <person name="Lareau L.F."/>
            <person name="Lazarevic D."/>
            <person name="Lipovich L."/>
            <person name="Liu J."/>
            <person name="Liuni S."/>
            <person name="McWilliam S."/>
            <person name="Madan Babu M."/>
            <person name="Madera M."/>
            <person name="Marchionni L."/>
            <person name="Matsuda H."/>
            <person name="Matsuzawa S."/>
            <person name="Miki H."/>
            <person name="Mignone F."/>
            <person name="Miyake S."/>
            <person name="Morris K."/>
            <person name="Mottagui-Tabar S."/>
            <person name="Mulder N."/>
            <person name="Nakano N."/>
            <person name="Nakauchi H."/>
            <person name="Ng P."/>
            <person name="Nilsson R."/>
            <person name="Nishiguchi S."/>
            <person name="Nishikawa S."/>
            <person name="Nori F."/>
            <person name="Ohara O."/>
            <person name="Okazaki Y."/>
            <person name="Orlando V."/>
            <person name="Pang K.C."/>
            <person name="Pavan W.J."/>
            <person name="Pavesi G."/>
            <person name="Pesole G."/>
            <person name="Petrovsky N."/>
            <person name="Piazza S."/>
            <person name="Reed J."/>
            <person name="Reid J.F."/>
            <person name="Ring B.Z."/>
            <person name="Ringwald M."/>
            <person name="Rost B."/>
            <person name="Ruan Y."/>
            <person name="Salzberg S.L."/>
            <person name="Sandelin A."/>
            <person name="Schneider C."/>
            <person name="Schoenbach C."/>
            <person name="Sekiguchi K."/>
            <person name="Semple C.A."/>
            <person name="Seno S."/>
            <person name="Sessa L."/>
            <person name="Sheng Y."/>
            <person name="Shibata Y."/>
            <person name="Shimada H."/>
            <person name="Shimada K."/>
            <person name="Silva D."/>
            <person name="Sinclair B."/>
            <person name="Sperling S."/>
            <person name="Stupka E."/>
            <person name="Sugiura K."/>
            <person name="Sultana R."/>
            <person name="Takenaka Y."/>
            <person name="Taki K."/>
            <person name="Tammoja K."/>
            <person name="Tan S.L."/>
            <person name="Tang S."/>
            <person name="Taylor M.S."/>
            <person name="Tegner J."/>
            <person name="Teichmann S.A."/>
            <person name="Ueda H.R."/>
            <person name="van Nimwegen E."/>
            <person name="Verardo R."/>
            <person name="Wei C.L."/>
            <person name="Yagi K."/>
            <person name="Yamanishi H."/>
            <person name="Zabarovsky E."/>
            <person name="Zhu S."/>
            <person name="Zimmer A."/>
            <person name="Hide W."/>
            <person name="Bult C."/>
            <person name="Grimmond S.M."/>
            <person name="Teasdale R.D."/>
            <person name="Liu E.T."/>
            <person name="Brusic V."/>
            <person name="Quackenbush J."/>
            <person name="Wahlestedt C."/>
            <person name="Mattick J.S."/>
            <person name="Hume D.A."/>
            <person name="Kai C."/>
            <person name="Sasaki D."/>
            <person name="Tomaru Y."/>
            <person name="Fukuda S."/>
            <person name="Kanamori-Katayama M."/>
            <person name="Suzuki M."/>
            <person name="Aoki J."/>
            <person name="Arakawa T."/>
            <person name="Iida J."/>
            <person name="Imamura K."/>
            <person name="Itoh M."/>
            <person name="Kato T."/>
            <person name="Kawaji H."/>
            <person name="Kawagashira N."/>
            <person name="Kawashima T."/>
            <person name="Kojima M."/>
            <person name="Kondo S."/>
            <person name="Konno H."/>
            <person name="Nakano K."/>
            <person name="Ninomiya N."/>
            <person name="Nishio T."/>
            <person name="Okada M."/>
            <person name="Plessy C."/>
            <person name="Shibata K."/>
            <person name="Shiraki T."/>
            <person name="Suzuki S."/>
            <person name="Tagami M."/>
            <person name="Waki K."/>
            <person name="Watahiki A."/>
            <person name="Okamura-Oho Y."/>
            <person name="Suzuki H."/>
            <person name="Kawai J."/>
            <person name="Hayashizaki Y."/>
        </authorList>
    </citation>
    <scope>NUCLEOTIDE SEQUENCE [LARGE SCALE MRNA] (ISOFORM 1)</scope>
    <source>
        <strain>NOD</strain>
        <tissue>Spleen</tissue>
    </source>
</reference>
<reference key="4">
    <citation type="journal article" date="2004" name="Genome Res.">
        <title>The status, quality, and expansion of the NIH full-length cDNA project: the Mammalian Gene Collection (MGC).</title>
        <authorList>
            <consortium name="The MGC Project Team"/>
        </authorList>
    </citation>
    <scope>NUCLEOTIDE SEQUENCE [LARGE SCALE MRNA] (ISOFORM 2)</scope>
    <source>
        <strain>Czech II</strain>
        <tissue>Mammary tumor</tissue>
    </source>
</reference>
<reference key="5">
    <citation type="journal article" date="2010" name="Cell">
        <title>A tissue-specific atlas of mouse protein phosphorylation and expression.</title>
        <authorList>
            <person name="Huttlin E.L."/>
            <person name="Jedrychowski M.P."/>
            <person name="Elias J.E."/>
            <person name="Goswami T."/>
            <person name="Rad R."/>
            <person name="Beausoleil S.A."/>
            <person name="Villen J."/>
            <person name="Haas W."/>
            <person name="Sowa M.E."/>
            <person name="Gygi S.P."/>
        </authorList>
    </citation>
    <scope>PHOSPHORYLATION [LARGE SCALE ANALYSIS] AT SER-180 AND SER-188</scope>
    <scope>IDENTIFICATION BY MASS SPECTROMETRY [LARGE SCALE ANALYSIS]</scope>
    <source>
        <tissue>Spleen</tissue>
        <tissue>Testis</tissue>
    </source>
</reference>
<sequence>MELEQREGTMAAVGFEEFSAPPGSELALPPLFGGHILESELETEVEFVSGGLGDSGLRERDEEEEAARGRRRRQRELNRRKYQALGRRCREIEQVNERVLNRLHQVQRITRRLQQERRFLMRVLDSYGDDYRDSQFTIVLEDDGSQGTDVPTPGNAENEPPEKEGLSPSQRTTATLDPTSPAPGEGPSGRKRRRAPRVGASLTPELAPVQVGAEGWGQGVIKVEEDFGFEADEALDSSWVSREPDKLLPYPTLASPPFD</sequence>
<organism>
    <name type="scientific">Mus musculus</name>
    <name type="common">Mouse</name>
    <dbReference type="NCBI Taxonomy" id="10090"/>
    <lineage>
        <taxon>Eukaryota</taxon>
        <taxon>Metazoa</taxon>
        <taxon>Chordata</taxon>
        <taxon>Craniata</taxon>
        <taxon>Vertebrata</taxon>
        <taxon>Euteleostomi</taxon>
        <taxon>Mammalia</taxon>
        <taxon>Eutheria</taxon>
        <taxon>Euarchontoglires</taxon>
        <taxon>Glires</taxon>
        <taxon>Rodentia</taxon>
        <taxon>Myomorpha</taxon>
        <taxon>Muroidea</taxon>
        <taxon>Muridae</taxon>
        <taxon>Murinae</taxon>
        <taxon>Mus</taxon>
        <taxon>Mus</taxon>
    </lineage>
</organism>
<accession>Q3U1J1</accession>
<accession>Q9EP77</accession>
<dbReference type="EMBL" id="AF267988">
    <property type="protein sequence ID" value="AAG48243.1"/>
    <property type="molecule type" value="mRNA"/>
</dbReference>
<dbReference type="EMBL" id="AB035134">
    <property type="protein sequence ID" value="BAB17318.1"/>
    <property type="molecule type" value="mRNA"/>
</dbReference>
<dbReference type="EMBL" id="AK155925">
    <property type="protein sequence ID" value="BAE33506.1"/>
    <property type="molecule type" value="mRNA"/>
</dbReference>
<dbReference type="EMBL" id="BC024356">
    <property type="protein sequence ID" value="AAH24356.1"/>
    <property type="molecule type" value="mRNA"/>
</dbReference>
<dbReference type="CCDS" id="CCDS20720.1">
    <molecule id="Q3U1J1-2"/>
</dbReference>
<dbReference type="CCDS" id="CCDS71873.1">
    <molecule id="Q3U1J1-1"/>
</dbReference>
<dbReference type="RefSeq" id="NP_001277310.1">
    <molecule id="Q3U1J1-1"/>
    <property type="nucleotide sequence ID" value="NM_001290381.2"/>
</dbReference>
<dbReference type="RefSeq" id="NP_076013.1">
    <molecule id="Q3U1J1-2"/>
    <property type="nucleotide sequence ID" value="NM_023524.3"/>
</dbReference>
<dbReference type="SMR" id="Q3U1J1"/>
<dbReference type="BioGRID" id="213632">
    <property type="interactions" value="1"/>
</dbReference>
<dbReference type="ComplexPortal" id="CPX-878">
    <property type="entry name" value="INO80 chromatin remodeling complex"/>
</dbReference>
<dbReference type="FunCoup" id="Q3U1J1">
    <property type="interactions" value="1929"/>
</dbReference>
<dbReference type="IntAct" id="Q3U1J1">
    <property type="interactions" value="1"/>
</dbReference>
<dbReference type="STRING" id="10090.ENSMUSP00000104281"/>
<dbReference type="GlyGen" id="Q3U1J1">
    <property type="glycosylation" value="2 sites, 1 O-linked glycan (1 site)"/>
</dbReference>
<dbReference type="iPTMnet" id="Q3U1J1"/>
<dbReference type="PhosphoSitePlus" id="Q3U1J1"/>
<dbReference type="jPOST" id="Q3U1J1"/>
<dbReference type="PaxDb" id="10090-ENSMUSP00000104281"/>
<dbReference type="PeptideAtlas" id="Q3U1J1"/>
<dbReference type="ProteomicsDB" id="262804">
    <molecule id="Q3U1J1-1"/>
</dbReference>
<dbReference type="ProteomicsDB" id="262805">
    <molecule id="Q3U1J1-2"/>
</dbReference>
<dbReference type="Antibodypedia" id="32793">
    <property type="antibodies" value="156 antibodies from 28 providers"/>
</dbReference>
<dbReference type="DNASU" id="69714"/>
<dbReference type="Ensembl" id="ENSMUST00000108641.10">
    <molecule id="Q3U1J1-1"/>
    <property type="protein sequence ID" value="ENSMUSP00000104281.4"/>
    <property type="gene ID" value="ENSMUSG00000006335.17"/>
</dbReference>
<dbReference type="Ensembl" id="ENSMUST00000155592.8">
    <molecule id="Q3U1J1-2"/>
    <property type="protein sequence ID" value="ENSMUSP00000123636.2"/>
    <property type="gene ID" value="ENSMUSG00000006335.17"/>
</dbReference>
<dbReference type="GeneID" id="69714"/>
<dbReference type="KEGG" id="mmu:69714"/>
<dbReference type="UCSC" id="uc009evf.2">
    <molecule id="Q3U1J1-2"/>
    <property type="organism name" value="mouse"/>
</dbReference>
<dbReference type="UCSC" id="uc009evg.2">
    <molecule id="Q3U1J1-1"/>
    <property type="organism name" value="mouse"/>
</dbReference>
<dbReference type="AGR" id="MGI:1916964"/>
<dbReference type="CTD" id="29844"/>
<dbReference type="MGI" id="MGI:1916964">
    <property type="gene designation" value="Tfpt"/>
</dbReference>
<dbReference type="VEuPathDB" id="HostDB:ENSMUSG00000006335"/>
<dbReference type="eggNOG" id="ENOG502RHUP">
    <property type="taxonomic scope" value="Eukaryota"/>
</dbReference>
<dbReference type="GeneTree" id="ENSGT00390000016605"/>
<dbReference type="HOGENOM" id="CLU_096140_0_0_1"/>
<dbReference type="InParanoid" id="Q3U1J1"/>
<dbReference type="OMA" id="WRCKEIE"/>
<dbReference type="OrthoDB" id="10070927at2759"/>
<dbReference type="PhylomeDB" id="Q3U1J1"/>
<dbReference type="TreeFam" id="TF338152"/>
<dbReference type="Reactome" id="R-MMU-5689603">
    <property type="pathway name" value="UCH proteinases"/>
</dbReference>
<dbReference type="Reactome" id="R-MMU-5696394">
    <property type="pathway name" value="DNA Damage Recognition in GG-NER"/>
</dbReference>
<dbReference type="BioGRID-ORCS" id="69714">
    <property type="hits" value="11 hits in 120 CRISPR screens"/>
</dbReference>
<dbReference type="PRO" id="PR:Q3U1J1"/>
<dbReference type="Proteomes" id="UP000000589">
    <property type="component" value="Chromosome 7"/>
</dbReference>
<dbReference type="RNAct" id="Q3U1J1">
    <property type="molecule type" value="protein"/>
</dbReference>
<dbReference type="Bgee" id="ENSMUSG00000006335">
    <property type="expression patterns" value="Expressed in aortic valve and 249 other cell types or tissues"/>
</dbReference>
<dbReference type="ExpressionAtlas" id="Q3U1J1">
    <property type="expression patterns" value="baseline and differential"/>
</dbReference>
<dbReference type="GO" id="GO:0005737">
    <property type="term" value="C:cytoplasm"/>
    <property type="evidence" value="ECO:0000250"/>
    <property type="project" value="UniProtKB"/>
</dbReference>
<dbReference type="GO" id="GO:0031011">
    <property type="term" value="C:Ino80 complex"/>
    <property type="evidence" value="ECO:0000266"/>
    <property type="project" value="ComplexPortal"/>
</dbReference>
<dbReference type="GO" id="GO:0005654">
    <property type="term" value="C:nucleoplasm"/>
    <property type="evidence" value="ECO:0007669"/>
    <property type="project" value="Ensembl"/>
</dbReference>
<dbReference type="GO" id="GO:0005634">
    <property type="term" value="C:nucleus"/>
    <property type="evidence" value="ECO:0000250"/>
    <property type="project" value="UniProtKB"/>
</dbReference>
<dbReference type="GO" id="GO:0003677">
    <property type="term" value="F:DNA binding"/>
    <property type="evidence" value="ECO:0000250"/>
    <property type="project" value="UniProtKB"/>
</dbReference>
<dbReference type="GO" id="GO:0019901">
    <property type="term" value="F:protein kinase binding"/>
    <property type="evidence" value="ECO:0000250"/>
    <property type="project" value="UniProtKB"/>
</dbReference>
<dbReference type="GO" id="GO:0006915">
    <property type="term" value="P:apoptotic process"/>
    <property type="evidence" value="ECO:0000250"/>
    <property type="project" value="UniProtKB"/>
</dbReference>
<dbReference type="GO" id="GO:0097190">
    <property type="term" value="P:apoptotic signaling pathway"/>
    <property type="evidence" value="ECO:0000250"/>
    <property type="project" value="UniProtKB"/>
</dbReference>
<dbReference type="GO" id="GO:0006338">
    <property type="term" value="P:chromatin remodeling"/>
    <property type="evidence" value="ECO:0000266"/>
    <property type="project" value="ComplexPortal"/>
</dbReference>
<dbReference type="GO" id="GO:0006310">
    <property type="term" value="P:DNA recombination"/>
    <property type="evidence" value="ECO:0007669"/>
    <property type="project" value="UniProtKB-KW"/>
</dbReference>
<dbReference type="GO" id="GO:0006281">
    <property type="term" value="P:DNA repair"/>
    <property type="evidence" value="ECO:0007669"/>
    <property type="project" value="UniProtKB-KW"/>
</dbReference>
<dbReference type="GO" id="GO:0045739">
    <property type="term" value="P:positive regulation of DNA repair"/>
    <property type="evidence" value="ECO:0000314"/>
    <property type="project" value="ComplexPortal"/>
</dbReference>
<dbReference type="GO" id="GO:0045893">
    <property type="term" value="P:positive regulation of DNA-templated transcription"/>
    <property type="evidence" value="ECO:0000266"/>
    <property type="project" value="ComplexPortal"/>
</dbReference>
<dbReference type="GO" id="GO:1904507">
    <property type="term" value="P:positive regulation of telomere maintenance in response to DNA damage"/>
    <property type="evidence" value="ECO:0000315"/>
    <property type="project" value="ComplexPortal"/>
</dbReference>
<dbReference type="GO" id="GO:0051726">
    <property type="term" value="P:regulation of cell cycle"/>
    <property type="evidence" value="ECO:0000266"/>
    <property type="project" value="ComplexPortal"/>
</dbReference>
<dbReference type="GO" id="GO:0033044">
    <property type="term" value="P:regulation of chromosome organization"/>
    <property type="evidence" value="ECO:0000266"/>
    <property type="project" value="ComplexPortal"/>
</dbReference>
<dbReference type="GO" id="GO:0006282">
    <property type="term" value="P:regulation of DNA repair"/>
    <property type="evidence" value="ECO:0000314"/>
    <property type="project" value="ComplexPortal"/>
</dbReference>
<dbReference type="GO" id="GO:0006275">
    <property type="term" value="P:regulation of DNA replication"/>
    <property type="evidence" value="ECO:0000266"/>
    <property type="project" value="ComplexPortal"/>
</dbReference>
<dbReference type="GO" id="GO:0060382">
    <property type="term" value="P:regulation of DNA strand elongation"/>
    <property type="evidence" value="ECO:0000266"/>
    <property type="project" value="ComplexPortal"/>
</dbReference>
<dbReference type="GO" id="GO:0045995">
    <property type="term" value="P:regulation of embryonic development"/>
    <property type="evidence" value="ECO:0000315"/>
    <property type="project" value="ComplexPortal"/>
</dbReference>
<dbReference type="GO" id="GO:0000723">
    <property type="term" value="P:telomere maintenance"/>
    <property type="evidence" value="ECO:0000315"/>
    <property type="project" value="ComplexPortal"/>
</dbReference>
<dbReference type="InterPro" id="IPR056513">
    <property type="entry name" value="INO80F"/>
</dbReference>
<dbReference type="InterPro" id="IPR033555">
    <property type="entry name" value="TFPT"/>
</dbReference>
<dbReference type="PANTHER" id="PTHR35084">
    <property type="entry name" value="TCF3 FUSION PARTNER"/>
    <property type="match status" value="1"/>
</dbReference>
<dbReference type="PANTHER" id="PTHR35084:SF1">
    <property type="entry name" value="TCF3 FUSION PARTNER"/>
    <property type="match status" value="1"/>
</dbReference>
<dbReference type="Pfam" id="PF24245">
    <property type="entry name" value="INO80F"/>
    <property type="match status" value="1"/>
</dbReference>
<evidence type="ECO:0000250" key="1"/>
<evidence type="ECO:0000250" key="2">
    <source>
        <dbReference type="UniProtKB" id="P0C1Z6"/>
    </source>
</evidence>
<evidence type="ECO:0000250" key="3">
    <source>
        <dbReference type="UniProtKB" id="Q9JMG6"/>
    </source>
</evidence>
<evidence type="ECO:0000256" key="4">
    <source>
        <dbReference type="SAM" id="MobiDB-lite"/>
    </source>
</evidence>
<evidence type="ECO:0000303" key="5">
    <source>
    </source>
</evidence>
<evidence type="ECO:0000303" key="6">
    <source ref="1"/>
</evidence>
<evidence type="ECO:0000303" key="7">
    <source ref="2"/>
</evidence>
<evidence type="ECO:0007744" key="8">
    <source>
    </source>
</evidence>
<keyword id="KW-0025">Alternative splicing</keyword>
<keyword id="KW-0053">Apoptosis</keyword>
<keyword id="KW-0227">DNA damage</keyword>
<keyword id="KW-0233">DNA recombination</keyword>
<keyword id="KW-0234">DNA repair</keyword>
<keyword id="KW-1017">Isopeptide bond</keyword>
<keyword id="KW-0539">Nucleus</keyword>
<keyword id="KW-0597">Phosphoprotein</keyword>
<keyword id="KW-1185">Reference proteome</keyword>
<keyword id="KW-0804">Transcription</keyword>
<keyword id="KW-0805">Transcription regulation</keyword>
<keyword id="KW-0832">Ubl conjugation</keyword>
<proteinExistence type="evidence at protein level"/>
<comment type="function">
    <text evidence="1">Appears to promote apoptosis in a p53/TP53-independent manner.</text>
</comment>
<comment type="function">
    <text>Putative regulatory component of the chromatin remodeling INO80 complex which is involved in transcriptional regulation, DNA replication and probably DNA repair.</text>
</comment>
<comment type="subunit">
    <text evidence="1 3">Interacts with NOL3; translocates NOL3 into the nucleus and negatively regulated TFPT-induced cell death. Component of the chromatin remodeling INO80 complex; specifically part of a complex module associated with the N-terminus of INO80 (By similarity).</text>
</comment>
<comment type="subcellular location">
    <subcellularLocation>
        <location evidence="1">Nucleus</location>
    </subcellularLocation>
</comment>
<comment type="alternative products">
    <event type="alternative splicing"/>
    <isoform>
        <id>Q3U1J1-1</id>
        <name>1</name>
        <sequence type="displayed"/>
    </isoform>
    <isoform>
        <id>Q3U1J1-2</id>
        <name>2</name>
        <sequence type="described" ref="VSP_021243"/>
    </isoform>
</comment>
<protein>
    <recommendedName>
        <fullName>TCF3 fusion partner homolog</fullName>
    </recommendedName>
    <alternativeName>
        <fullName>Protein FB1</fullName>
    </alternativeName>
    <alternativeName>
        <fullName>Protein amida</fullName>
    </alternativeName>
</protein>
<name>TFPT_MOUSE</name>
<gene>
    <name type="primary">Tfpt</name>
    <name type="synonym">Amida</name>
</gene>
<feature type="chain" id="PRO_0000254582" description="TCF3 fusion partner homolog">
    <location>
        <begin position="1"/>
        <end position="259"/>
    </location>
</feature>
<feature type="region of interest" description="Disordered" evidence="4">
    <location>
        <begin position="50"/>
        <end position="72"/>
    </location>
</feature>
<feature type="region of interest" description="Disordered" evidence="4">
    <location>
        <begin position="141"/>
        <end position="210"/>
    </location>
</feature>
<feature type="compositionally biased region" description="Polar residues" evidence="4">
    <location>
        <begin position="167"/>
        <end position="178"/>
    </location>
</feature>
<feature type="modified residue" description="Phosphoserine" evidence="2">
    <location>
        <position position="167"/>
    </location>
</feature>
<feature type="modified residue" description="Phosphothreonine" evidence="2">
    <location>
        <position position="172"/>
    </location>
</feature>
<feature type="modified residue" description="Phosphoserine" evidence="8">
    <location>
        <position position="180"/>
    </location>
</feature>
<feature type="modified residue" description="Phosphoserine" evidence="8">
    <location>
        <position position="188"/>
    </location>
</feature>
<feature type="modified residue" description="Phosphothreonine" evidence="2">
    <location>
        <position position="203"/>
    </location>
</feature>
<feature type="modified residue" description="Phosphoserine" evidence="2">
    <location>
        <position position="255"/>
    </location>
</feature>
<feature type="cross-link" description="Glycyl lysine isopeptide (Lys-Gly) (interchain with G-Cter in SUMO2)" evidence="2">
    <location>
        <position position="222"/>
    </location>
</feature>
<feature type="splice variant" id="VSP_021243" description="In isoform 2." evidence="5 6 7">
    <location>
        <begin position="211"/>
        <end position="220"/>
    </location>
</feature>